<sequence>MDDSSLQKVELQTDVYMVCLQHALSTENFEVMGLLIGNFACGIAKISAVIILRRLDKKKDRVEISSEQLLKAAAEAERLTVELNRPMRVLGWYHSHPHITVCPSHVDVRTQATYQTMDHSFVGLIFSVFSEGKESKEHEIFLNCFQSDNGEATEIPLEIVHTPDISDRCLRTMTDLSKILVQEEEDMAEACKDHPDVLASIHNNAVRTRALIHITDIITKPLVQTFEKRIALNKLRATHLQRQLQELQKMCNG</sequence>
<feature type="chain" id="PRO_0000435530" description="Lys-63-specific deubiquitinase BRCC36">
    <location>
        <begin position="1"/>
        <end position="253"/>
    </location>
</feature>
<feature type="domain" description="MPN" evidence="5">
    <location>
        <begin position="9"/>
        <end position="145"/>
    </location>
</feature>
<feature type="coiled-coil region" evidence="4">
    <location>
        <begin position="227"/>
        <end position="249"/>
    </location>
</feature>
<feature type="short sequence motif" description="JAMM motif" evidence="5">
    <location>
        <begin position="94"/>
        <end position="107"/>
    </location>
</feature>
<feature type="binding site" evidence="5">
    <location>
        <position position="94"/>
    </location>
    <ligand>
        <name>Zn(2+)</name>
        <dbReference type="ChEBI" id="CHEBI:29105"/>
        <note>catalytic</note>
    </ligand>
</feature>
<feature type="binding site" evidence="5">
    <location>
        <position position="96"/>
    </location>
    <ligand>
        <name>Zn(2+)</name>
        <dbReference type="ChEBI" id="CHEBI:29105"/>
        <note>catalytic</note>
    </ligand>
</feature>
<feature type="binding site" evidence="5">
    <location>
        <position position="107"/>
    </location>
    <ligand>
        <name>Zn(2+)</name>
        <dbReference type="ChEBI" id="CHEBI:29105"/>
        <note>catalytic</note>
    </ligand>
</feature>
<feature type="mutagenesis site" description="Abolishes metalloprotease activity." evidence="6">
    <original>E</original>
    <variation>A</variation>
    <location>
        <position position="30"/>
    </location>
</feature>
<feature type="mutagenesis site" description="Abolishes zinc binding and disrupts the structure of the active site region." evidence="6">
    <original>HSH</original>
    <variation>QSQ</variation>
    <location>
        <begin position="94"/>
        <end position="96"/>
    </location>
</feature>
<feature type="mutagenesis site" description="Nearly abolishes metalloprotease activity." evidence="6">
    <original>I</original>
    <variation>R</variation>
    <location>
        <position position="99"/>
    </location>
</feature>
<feature type="mutagenesis site" description="Nearly abolishes metalloprotease activity." evidence="6">
    <original>M</original>
    <variation>A</variation>
    <location>
        <position position="117"/>
    </location>
</feature>
<feature type="mutagenesis site" description="Abolishes metalloprotease activity; when associated with A-186." evidence="6">
    <original>E</original>
    <variation>A</variation>
    <location>
        <position position="183"/>
    </location>
</feature>
<feature type="mutagenesis site" description="Abolishes metalloprotease activity; when associated with A-183." evidence="6">
    <original>D</original>
    <variation>A</variation>
    <location>
        <position position="186"/>
    </location>
</feature>
<feature type="mutagenesis site" description="Abolishes tetramerization and metalloprotease activity; when associated with D-212." evidence="6">
    <original>A</original>
    <variation>D</variation>
    <location>
        <position position="205"/>
    </location>
</feature>
<feature type="mutagenesis site" description="Abolishes tetramerization and metalloprotease activity; when associated with D-205." evidence="6">
    <original>I</original>
    <variation>D</variation>
    <location>
        <position position="212"/>
    </location>
</feature>
<feature type="strand" evidence="13">
    <location>
        <begin position="8"/>
        <end position="12"/>
    </location>
</feature>
<feature type="helix" evidence="13">
    <location>
        <begin position="13"/>
        <end position="23"/>
    </location>
</feature>
<feature type="strand" evidence="13">
    <location>
        <begin position="27"/>
        <end position="29"/>
    </location>
</feature>
<feature type="strand" evidence="13">
    <location>
        <begin position="32"/>
        <end position="39"/>
    </location>
</feature>
<feature type="strand" evidence="13">
    <location>
        <begin position="41"/>
        <end position="51"/>
    </location>
</feature>
<feature type="helix" evidence="13">
    <location>
        <begin position="66"/>
        <end position="82"/>
    </location>
</feature>
<feature type="strand" evidence="13">
    <location>
        <begin position="88"/>
        <end position="97"/>
    </location>
</feature>
<feature type="helix" evidence="13">
    <location>
        <begin position="105"/>
        <end position="117"/>
    </location>
</feature>
<feature type="strand" evidence="13">
    <location>
        <begin position="122"/>
        <end position="131"/>
    </location>
</feature>
<feature type="turn" evidence="13">
    <location>
        <begin position="133"/>
        <end position="135"/>
    </location>
</feature>
<feature type="strand" evidence="13">
    <location>
        <begin position="138"/>
        <end position="147"/>
    </location>
</feature>
<feature type="strand" evidence="13">
    <location>
        <begin position="149"/>
        <end position="154"/>
    </location>
</feature>
<feature type="strand" evidence="13">
    <location>
        <begin position="157"/>
        <end position="160"/>
    </location>
</feature>
<feature type="helix" evidence="13">
    <location>
        <begin position="167"/>
        <end position="189"/>
    </location>
</feature>
<feature type="helix" evidence="13">
    <location>
        <begin position="197"/>
        <end position="217"/>
    </location>
</feature>
<feature type="helix" evidence="13">
    <location>
        <begin position="219"/>
        <end position="249"/>
    </location>
</feature>
<name>BRCC3_CAMFO</name>
<comment type="function">
    <text evidence="2 3 6">Metalloprotease that specifically cleaves 'Lys-63'-linked polyubiquitin chains, leaving the last ubiquitin chain attached to its substrates. Catalytic subunit of the BRISC complex; does not have activity by itself, but needs to be associated into a heterotetramer with ABRAXAS2 for minimal in vitro activity (PubMed:26344097). Plays a role in regulating the onset of apoptosis via its role in modulating 'Lys-63'-linked ubiquitination of target proteins (By similarity). Required for normal mitotic spindle assembly and microtubule attachment to kinetochores via its role in deubiquitinating spindle assembly factors (By similarity).</text>
</comment>
<comment type="cofactor">
    <cofactor evidence="6">
        <name>Zn(2+)</name>
        <dbReference type="ChEBI" id="CHEBI:29105"/>
    </cofactor>
    <text evidence="6">Binds 1 zinc ion per subunit.</text>
</comment>
<comment type="subunit">
    <text evidence="6">Component of the BRISC complex, at least composed of ABRAXAS2, BRCC3/BRCC36, BABAM2 and BABAM1/NBA1. Within the complex, interacts directly with ABRAXAS2. The heterodimer with ABRAXAS2 assembles into a heterotetramer. The BRISC complex binds polyubiquitin.</text>
</comment>
<comment type="subcellular location">
    <subcellularLocation>
        <location evidence="1">Cytoplasm</location>
    </subcellularLocation>
    <subcellularLocation>
        <location evidence="1">Nucleus</location>
    </subcellularLocation>
    <subcellularLocation>
        <location evidence="2">Cytoplasm</location>
        <location evidence="2">Cytoskeleton</location>
        <location evidence="2">Spindle pole</location>
    </subcellularLocation>
    <subcellularLocation>
        <location evidence="2">Cytoplasm</location>
        <location evidence="2">Cytoskeleton</location>
    </subcellularLocation>
    <text evidence="2">A minor proportion is detected in the nucleus. Translocates into the nucleus in response to DNA damage. Directly binds to microtubules and is detected at the minus end of K-fibers.</text>
</comment>
<comment type="similarity">
    <text evidence="8">Belongs to the peptidase M67A family. BRCC36 subfamily.</text>
</comment>
<accession>E2AXC7</accession>
<proteinExistence type="evidence at protein level"/>
<gene>
    <name evidence="8" type="primary">BRCC3</name>
    <name evidence="7" type="synonym">BRCC36</name>
    <name evidence="9" type="ORF">EAG_15736</name>
</gene>
<protein>
    <recommendedName>
        <fullName evidence="8">Lys-63-specific deubiquitinase BRCC36</fullName>
        <ecNumber evidence="6">3.4.19.-</ecNumber>
    </recommendedName>
</protein>
<keyword id="KW-0002">3D-structure</keyword>
<keyword id="KW-0131">Cell cycle</keyword>
<keyword id="KW-0132">Cell division</keyword>
<keyword id="KW-0175">Coiled coil</keyword>
<keyword id="KW-0963">Cytoplasm</keyword>
<keyword id="KW-0206">Cytoskeleton</keyword>
<keyword id="KW-0378">Hydrolase</keyword>
<keyword id="KW-0479">Metal-binding</keyword>
<keyword id="KW-0482">Metalloprotease</keyword>
<keyword id="KW-0498">Mitosis</keyword>
<keyword id="KW-0539">Nucleus</keyword>
<keyword id="KW-0645">Protease</keyword>
<keyword id="KW-1185">Reference proteome</keyword>
<keyword id="KW-0833">Ubl conjugation pathway</keyword>
<keyword id="KW-0862">Zinc</keyword>
<evidence type="ECO:0000250" key="1">
    <source>
        <dbReference type="UniProtKB" id="P46736"/>
    </source>
</evidence>
<evidence type="ECO:0000250" key="2">
    <source>
        <dbReference type="UniProtKB" id="Q15018"/>
    </source>
</evidence>
<evidence type="ECO:0000250" key="3">
    <source>
        <dbReference type="UniProtKB" id="Q3TCJ1"/>
    </source>
</evidence>
<evidence type="ECO:0000255" key="4"/>
<evidence type="ECO:0000255" key="5">
    <source>
        <dbReference type="PROSITE-ProRule" id="PRU01182"/>
    </source>
</evidence>
<evidence type="ECO:0000269" key="6">
    <source>
    </source>
</evidence>
<evidence type="ECO:0000303" key="7">
    <source>
    </source>
</evidence>
<evidence type="ECO:0000305" key="8"/>
<evidence type="ECO:0000312" key="9">
    <source>
        <dbReference type="EMBL" id="EFN61907.1"/>
    </source>
</evidence>
<evidence type="ECO:0007744" key="10">
    <source>
        <dbReference type="PDB" id="5CW3"/>
    </source>
</evidence>
<evidence type="ECO:0007744" key="11">
    <source>
        <dbReference type="PDB" id="5CW4"/>
    </source>
</evidence>
<evidence type="ECO:0007744" key="12">
    <source>
        <dbReference type="PDB" id="5CW5"/>
    </source>
</evidence>
<evidence type="ECO:0007829" key="13">
    <source>
        <dbReference type="PDB" id="5CW4"/>
    </source>
</evidence>
<reference evidence="9" key="1">
    <citation type="journal article" date="2010" name="Science">
        <title>Genomic comparison of the ants Camponotus floridanus and Harpegnathos saltator.</title>
        <authorList>
            <person name="Bonasio R."/>
            <person name="Zhang G."/>
            <person name="Ye C."/>
            <person name="Mutti N.S."/>
            <person name="Fang X."/>
            <person name="Qin N."/>
            <person name="Donahue G."/>
            <person name="Yang P."/>
            <person name="Li Q."/>
            <person name="Li C."/>
            <person name="Zhang P."/>
            <person name="Huang Z."/>
            <person name="Berger S.L."/>
            <person name="Reinberg D."/>
            <person name="Wang J."/>
            <person name="Liebig J."/>
        </authorList>
    </citation>
    <scope>NUCLEOTIDE SEQUENCE [LARGE SCALE GENOMIC DNA]</scope>
</reference>
<reference evidence="10 11 12" key="2">
    <citation type="journal article" date="2015" name="Mol. Cell">
        <title>Higher-order assembly of BRCC36-KIAA0157 is required for DUB activity and biological function.</title>
        <authorList>
            <person name="Zeqiraj E."/>
            <person name="Tian L."/>
            <person name="Piggott C.A."/>
            <person name="Pillon M.C."/>
            <person name="Duffy N.M."/>
            <person name="Ceccarelli D.F."/>
            <person name="Keszei A.F."/>
            <person name="Lorenzen K."/>
            <person name="Kurinov I."/>
            <person name="Orlicky S."/>
            <person name="Gish G.D."/>
            <person name="Heck A.J."/>
            <person name="Guarne A."/>
            <person name="Greenberg R.A."/>
            <person name="Sicheri F."/>
        </authorList>
    </citation>
    <scope>X-RAY CRYSTALLOGRAPHY (2.54 ANGSTROMS) IN COMPLEX WITH ZINC AND ABRAXAS2</scope>
    <scope>FUNCTION</scope>
    <scope>CATALYTIC ACTIVITY</scope>
    <scope>COFACTOR</scope>
    <scope>IDENTIFICATION IN THE BRISC COMPLEX</scope>
    <scope>INTERACTION WITH ABRAXAS2</scope>
    <scope>SUBUNIT</scope>
    <scope>MUTAGENESIS OF GLU-30; 94-HIS--HIS-96; ILE-99; MET-117; GLU-183; ASP-186; ALA-205 AND ILE-212</scope>
</reference>
<organism>
    <name type="scientific">Camponotus floridanus</name>
    <name type="common">Florida carpenter ant</name>
    <dbReference type="NCBI Taxonomy" id="104421"/>
    <lineage>
        <taxon>Eukaryota</taxon>
        <taxon>Metazoa</taxon>
        <taxon>Ecdysozoa</taxon>
        <taxon>Arthropoda</taxon>
        <taxon>Hexapoda</taxon>
        <taxon>Insecta</taxon>
        <taxon>Pterygota</taxon>
        <taxon>Neoptera</taxon>
        <taxon>Endopterygota</taxon>
        <taxon>Hymenoptera</taxon>
        <taxon>Apocrita</taxon>
        <taxon>Aculeata</taxon>
        <taxon>Formicoidea</taxon>
        <taxon>Formicidae</taxon>
        <taxon>Formicinae</taxon>
        <taxon>Camponotus</taxon>
    </lineage>
</organism>
<dbReference type="EC" id="3.4.19.-" evidence="6"/>
<dbReference type="EMBL" id="GL443548">
    <property type="protein sequence ID" value="EFN61907.1"/>
    <property type="molecule type" value="Genomic_DNA"/>
</dbReference>
<dbReference type="PDB" id="5CW3">
    <property type="method" value="X-ray"/>
    <property type="resolution" value="2.55 A"/>
    <property type="chains" value="A/C=1-253"/>
</dbReference>
<dbReference type="PDB" id="5CW4">
    <property type="method" value="X-ray"/>
    <property type="resolution" value="2.54 A"/>
    <property type="chains" value="A/C=1-253"/>
</dbReference>
<dbReference type="PDB" id="5CW5">
    <property type="method" value="X-ray"/>
    <property type="resolution" value="2.74 A"/>
    <property type="chains" value="A/C=1-253"/>
</dbReference>
<dbReference type="PDBsum" id="5CW3"/>
<dbReference type="PDBsum" id="5CW4"/>
<dbReference type="PDBsum" id="5CW5"/>
<dbReference type="SMR" id="E2AXC7"/>
<dbReference type="STRING" id="104421.E2AXC7"/>
<dbReference type="MEROPS" id="M67.004"/>
<dbReference type="EnsemblMetazoa" id="XM_011267376.3">
    <property type="protein sequence ID" value="XP_011265678.1"/>
    <property type="gene ID" value="LOC105257032"/>
</dbReference>
<dbReference type="GeneID" id="105257032"/>
<dbReference type="KEGG" id="cfo:105257032"/>
<dbReference type="OMA" id="CQEEQNA"/>
<dbReference type="OrthoDB" id="446074at2759"/>
<dbReference type="EvolutionaryTrace" id="E2AXC7"/>
<dbReference type="Proteomes" id="UP000000311">
    <property type="component" value="Unassembled WGS sequence"/>
</dbReference>
<dbReference type="GO" id="GO:0070531">
    <property type="term" value="C:BRCA1-A complex"/>
    <property type="evidence" value="ECO:0007669"/>
    <property type="project" value="InterPro"/>
</dbReference>
<dbReference type="GO" id="GO:0070552">
    <property type="term" value="C:BRISC complex"/>
    <property type="evidence" value="ECO:0007669"/>
    <property type="project" value="InterPro"/>
</dbReference>
<dbReference type="GO" id="GO:0005737">
    <property type="term" value="C:cytoplasm"/>
    <property type="evidence" value="ECO:0007669"/>
    <property type="project" value="UniProtKB-SubCell"/>
</dbReference>
<dbReference type="GO" id="GO:0000922">
    <property type="term" value="C:spindle pole"/>
    <property type="evidence" value="ECO:0007669"/>
    <property type="project" value="UniProtKB-SubCell"/>
</dbReference>
<dbReference type="GO" id="GO:0004843">
    <property type="term" value="F:cysteine-type deubiquitinase activity"/>
    <property type="evidence" value="ECO:0007669"/>
    <property type="project" value="InterPro"/>
</dbReference>
<dbReference type="GO" id="GO:0046872">
    <property type="term" value="F:metal ion binding"/>
    <property type="evidence" value="ECO:0007669"/>
    <property type="project" value="UniProtKB-KW"/>
</dbReference>
<dbReference type="GO" id="GO:0140492">
    <property type="term" value="F:metal-dependent deubiquitinase activity"/>
    <property type="evidence" value="ECO:0000250"/>
    <property type="project" value="UniProtKB"/>
</dbReference>
<dbReference type="GO" id="GO:0051301">
    <property type="term" value="P:cell division"/>
    <property type="evidence" value="ECO:0007669"/>
    <property type="project" value="UniProtKB-KW"/>
</dbReference>
<dbReference type="GO" id="GO:0006281">
    <property type="term" value="P:DNA repair"/>
    <property type="evidence" value="ECO:0007669"/>
    <property type="project" value="InterPro"/>
</dbReference>
<dbReference type="GO" id="GO:1900227">
    <property type="term" value="P:positive regulation of NLRP3 inflammasome complex assembly"/>
    <property type="evidence" value="ECO:0000250"/>
    <property type="project" value="UniProtKB"/>
</dbReference>
<dbReference type="GO" id="GO:0070536">
    <property type="term" value="P:protein K63-linked deubiquitination"/>
    <property type="evidence" value="ECO:0007669"/>
    <property type="project" value="InterPro"/>
</dbReference>
<dbReference type="GO" id="GO:0006508">
    <property type="term" value="P:proteolysis"/>
    <property type="evidence" value="ECO:0007669"/>
    <property type="project" value="UniProtKB-KW"/>
</dbReference>
<dbReference type="CDD" id="cd08068">
    <property type="entry name" value="MPN_BRCC36"/>
    <property type="match status" value="1"/>
</dbReference>
<dbReference type="Gene3D" id="3.40.140.10">
    <property type="entry name" value="Cytidine Deaminase, domain 2"/>
    <property type="match status" value="1"/>
</dbReference>
<dbReference type="InterPro" id="IPR040749">
    <property type="entry name" value="BRCC36_C"/>
</dbReference>
<dbReference type="InterPro" id="IPR000555">
    <property type="entry name" value="JAMM/MPN+_dom"/>
</dbReference>
<dbReference type="InterPro" id="IPR050242">
    <property type="entry name" value="JAMM_MPN+_peptidase_M67A"/>
</dbReference>
<dbReference type="InterPro" id="IPR037518">
    <property type="entry name" value="MPN"/>
</dbReference>
<dbReference type="InterPro" id="IPR033860">
    <property type="entry name" value="MPN_BRCC36"/>
</dbReference>
<dbReference type="PANTHER" id="PTHR10410">
    <property type="entry name" value="EUKARYOTIC TRANSLATION INITIATION FACTOR 3 -RELATED"/>
    <property type="match status" value="1"/>
</dbReference>
<dbReference type="Pfam" id="PF18110">
    <property type="entry name" value="BRCC36_C"/>
    <property type="match status" value="1"/>
</dbReference>
<dbReference type="Pfam" id="PF01398">
    <property type="entry name" value="JAB"/>
    <property type="match status" value="1"/>
</dbReference>
<dbReference type="SMART" id="SM00232">
    <property type="entry name" value="JAB_MPN"/>
    <property type="match status" value="1"/>
</dbReference>
<dbReference type="SUPFAM" id="SSF102712">
    <property type="entry name" value="JAB1/MPN domain"/>
    <property type="match status" value="1"/>
</dbReference>
<dbReference type="PROSITE" id="PS50249">
    <property type="entry name" value="MPN"/>
    <property type="match status" value="1"/>
</dbReference>